<keyword id="KW-0106">Calcium</keyword>
<keyword id="KW-0119">Carbohydrate metabolism</keyword>
<keyword id="KW-0903">Direct protein sequencing</keyword>
<keyword id="KW-1015">Disulfide bond</keyword>
<keyword id="KW-0378">Hydrolase</keyword>
<keyword id="KW-0479">Metal-binding</keyword>
<keyword id="KW-0624">Polysaccharide degradation</keyword>
<keyword id="KW-1185">Reference proteome</keyword>
<keyword id="KW-0964">Secreted</keyword>
<keyword id="KW-0719">Serine esterase</keyword>
<keyword id="KW-0732">Signal</keyword>
<keyword id="KW-0858">Xylan degradation</keyword>
<feature type="signal peptide">
    <location>
        <begin position="1"/>
        <end position="25"/>
    </location>
</feature>
<feature type="chain" id="PRO_5001370416" description="Feruloyl esterase C">
    <location>
        <begin position="26"/>
        <end position="530"/>
    </location>
</feature>
<feature type="active site" description="Acyl-ester intermediate" evidence="2">
    <location>
        <position position="191"/>
    </location>
</feature>
<feature type="active site" description="Charge relay system" evidence="2">
    <location>
        <position position="403"/>
    </location>
</feature>
<feature type="active site" description="Charge relay system" evidence="2">
    <location>
        <position position="443"/>
    </location>
</feature>
<feature type="binding site" evidence="2">
    <location>
        <position position="260"/>
    </location>
    <ligand>
        <name>Ca(2+)</name>
        <dbReference type="ChEBI" id="CHEBI:29108"/>
    </ligand>
</feature>
<feature type="binding site" evidence="2">
    <location>
        <position position="263"/>
    </location>
    <ligand>
        <name>Ca(2+)</name>
        <dbReference type="ChEBI" id="CHEBI:29108"/>
    </ligand>
</feature>
<feature type="binding site" evidence="2">
    <location>
        <position position="265"/>
    </location>
    <ligand>
        <name>Ca(2+)</name>
        <dbReference type="ChEBI" id="CHEBI:29108"/>
    </ligand>
</feature>
<feature type="binding site" evidence="2">
    <location>
        <position position="267"/>
    </location>
    <ligand>
        <name>Ca(2+)</name>
        <dbReference type="ChEBI" id="CHEBI:29108"/>
    </ligand>
</feature>
<feature type="binding site" evidence="2">
    <location>
        <position position="269"/>
    </location>
    <ligand>
        <name>Ca(2+)</name>
        <dbReference type="ChEBI" id="CHEBI:29108"/>
    </ligand>
</feature>
<feature type="disulfide bond" evidence="2">
    <location>
        <begin position="31"/>
        <end position="78"/>
    </location>
</feature>
<feature type="disulfide bond" evidence="2">
    <location>
        <begin position="66"/>
        <end position="117"/>
    </location>
</feature>
<feature type="disulfide bond" evidence="2">
    <location>
        <begin position="190"/>
        <end position="444"/>
    </location>
</feature>
<feature type="disulfide bond" evidence="2">
    <location>
        <begin position="259"/>
        <end position="276"/>
    </location>
</feature>
<feature type="disulfide bond" evidence="2">
    <location>
        <begin position="285"/>
        <end position="294"/>
    </location>
</feature>
<feature type="disulfide bond" evidence="2">
    <location>
        <begin position="506"/>
        <end position="528"/>
    </location>
</feature>
<organism>
    <name type="scientific">Talaromyces stipitatus (strain ATCC 10500 / CBS 375.48 / QM 6759 / NRRL 1006)</name>
    <name type="common">Penicillium stipitatum</name>
    <dbReference type="NCBI Taxonomy" id="441959"/>
    <lineage>
        <taxon>Eukaryota</taxon>
        <taxon>Fungi</taxon>
        <taxon>Dikarya</taxon>
        <taxon>Ascomycota</taxon>
        <taxon>Pezizomycotina</taxon>
        <taxon>Eurotiomycetes</taxon>
        <taxon>Eurotiomycetidae</taxon>
        <taxon>Eurotiales</taxon>
        <taxon>Trichocomaceae</taxon>
        <taxon>Talaromyces</taxon>
        <taxon>Talaromyces sect. Talaromyces</taxon>
    </lineage>
</organism>
<comment type="function">
    <text evidence="1 3">Involved in degradation of plant cell walls. Hydrolyzes the feruloyl-arabinose ester bond in arabinoxylans as well as the feruloyl-galactose and feruloyl-arabinose ester bonds in pectin (By similarity). Active against methyl esters of sinapate (MSA) and caffeate (MCA) (PubMed:15006424).</text>
</comment>
<comment type="catalytic activity">
    <reaction evidence="3">
        <text>feruloyl-polysaccharide + H2O = ferulate + polysaccharide.</text>
        <dbReference type="EC" id="3.1.1.73"/>
    </reaction>
</comment>
<comment type="subcellular location">
    <subcellularLocation>
        <location evidence="1">Secreted</location>
    </subcellularLocation>
</comment>
<comment type="similarity">
    <text evidence="5">Belongs to the tannase family.</text>
</comment>
<reference key="1">
    <citation type="journal article" date="2004" name="J. Biotechnol.">
        <title>The feruloyl esterase system of Talaromyces stipitatus: production of three discrete feruloyl esterases, including a novel enzyme, TsFaeC, with a broad substrate specificity.</title>
        <authorList>
            <person name="Garcia-Conesa M.T."/>
            <person name="Crepin V.F."/>
            <person name="Goldson A.J."/>
            <person name="Williamson G."/>
            <person name="Cummings N.J."/>
            <person name="Connerton I.F."/>
            <person name="Faulds C.B."/>
            <person name="Kroon P.A."/>
        </authorList>
    </citation>
    <scope>NUCLEOTIDE SEQUENCE [GENOMIC DNA]</scope>
    <scope>PROTEIN SEQUENCE OF 26-44; 322-341; 395-412; 476-487 AND 512-527</scope>
    <scope>FUNCTION</scope>
    <scope>CATALYTIC ACTIVITY</scope>
    <source>
        <strain>ATCC 10500 / CBS 375.48 / QM 6759 / NRRL 1006</strain>
    </source>
</reference>
<reference key="2">
    <citation type="journal article" date="2015" name="Genome Announc.">
        <title>Genome sequence of the AIDS-associated pathogen Penicillium marneffei (ATCC18224) and its near taxonomic relative Talaromyces stipitatus (ATCC10500).</title>
        <authorList>
            <person name="Nierman W.C."/>
            <person name="Fedorova-Abrams N.D."/>
            <person name="Andrianopoulos A."/>
        </authorList>
    </citation>
    <scope>NUCLEOTIDE SEQUENCE [LARGE SCALE GENOMIC DNA]</scope>
    <source>
        <strain>ATCC 10500 / CBS 375.48 / QM 6759 / NRRL 1006</strain>
    </source>
</reference>
<accession>B8LV47</accession>
<accession>Q70Y21</accession>
<protein>
    <recommendedName>
        <fullName evidence="4">Feruloyl esterase C</fullName>
        <ecNumber evidence="3">3.1.1.73</ecNumber>
    </recommendedName>
    <alternativeName>
        <fullName>Ferulic acid esterase C</fullName>
        <shortName>FAE</shortName>
    </alternativeName>
</protein>
<sequence>MMLTSAILLLTLGVQLSHADDSSRENFSNRCDQLAKEIHIPNVTVNFVEYVANGTNVTLADNPPSCGQSNQVVLADLCRVAMEVTTSNQSQITLEAWFPENYTGRFLSTGNGGLAGCIQYVDMAYASSMGFATVGANGGHNGTSGESFYHNPDIVEDLSWRSVHTGVVVGKELTKKFYHEGFHKSYYLGCSTGGRQGFKAVQEFVHDFDGVVAGCPAFNFVNLNSWSGHFYPITGNSSADTFLTTAQWTLVQQSVMEQCDSLDGAVDGVIEAIDQCHPVFEQLICRPGQNASECLTGKQVNTAQLVLSPIYGTKGEFLYPRMQPGVENVDMYITYNGDPFAYSTDWYKYVVFSDPNWDPATLNAQDYEIALAQNPSNIQTFEGDLSAFRDAGAKVLTYHGTADPIITGETSKVYYRHVAETMNAAPEELDEFYRYFRIGGMSHCGGGTGATAIGNVLSAQWSNDPDANVLMAMVRWVEEGVAPEYIRGASLGSGPGAKVEYTRRHCKYPTRNVYVGPGNWTDENAWKCIL</sequence>
<name>FAEC_TALSN</name>
<evidence type="ECO:0000250" key="1">
    <source>
        <dbReference type="UniProtKB" id="O42807"/>
    </source>
</evidence>
<evidence type="ECO:0000250" key="2">
    <source>
        <dbReference type="UniProtKB" id="Q2UP89"/>
    </source>
</evidence>
<evidence type="ECO:0000269" key="3">
    <source>
    </source>
</evidence>
<evidence type="ECO:0000303" key="4">
    <source>
    </source>
</evidence>
<evidence type="ECO:0000305" key="5"/>
<gene>
    <name type="primary">faeC</name>
    <name type="ORF">TSTA_065520</name>
</gene>
<proteinExistence type="evidence at protein level"/>
<dbReference type="EC" id="3.1.1.73" evidence="3"/>
<dbReference type="EMBL" id="AJ505939">
    <property type="protein sequence ID" value="CAD44531.1"/>
    <property type="molecule type" value="Genomic_DNA"/>
</dbReference>
<dbReference type="EMBL" id="EQ962652">
    <property type="protein sequence ID" value="EED23097.1"/>
    <property type="molecule type" value="Genomic_DNA"/>
</dbReference>
<dbReference type="RefSeq" id="XP_002340484.1">
    <property type="nucleotide sequence ID" value="XM_002340443.1"/>
</dbReference>
<dbReference type="SMR" id="B8LV47"/>
<dbReference type="STRING" id="441959.B8LV47"/>
<dbReference type="ESTHER" id="9euro-q70y21">
    <property type="family name" value="Tannase"/>
</dbReference>
<dbReference type="GeneID" id="8109464"/>
<dbReference type="VEuPathDB" id="FungiDB:TSTA_065520"/>
<dbReference type="eggNOG" id="ENOG502QPXZ">
    <property type="taxonomic scope" value="Eukaryota"/>
</dbReference>
<dbReference type="HOGENOM" id="CLU_014819_1_0_1"/>
<dbReference type="InParanoid" id="B8LV47"/>
<dbReference type="OMA" id="AWFPREY"/>
<dbReference type="OrthoDB" id="3039123at2759"/>
<dbReference type="PhylomeDB" id="B8LV47"/>
<dbReference type="BRENDA" id="3.1.1.73">
    <property type="organism ID" value="4645"/>
</dbReference>
<dbReference type="Proteomes" id="UP000001745">
    <property type="component" value="Unassembled WGS sequence"/>
</dbReference>
<dbReference type="GO" id="GO:0005576">
    <property type="term" value="C:extracellular region"/>
    <property type="evidence" value="ECO:0007669"/>
    <property type="project" value="UniProtKB-SubCell"/>
</dbReference>
<dbReference type="GO" id="GO:0030600">
    <property type="term" value="F:feruloyl esterase activity"/>
    <property type="evidence" value="ECO:0007669"/>
    <property type="project" value="UniProtKB-EC"/>
</dbReference>
<dbReference type="GO" id="GO:0046872">
    <property type="term" value="F:metal ion binding"/>
    <property type="evidence" value="ECO:0007669"/>
    <property type="project" value="UniProtKB-KW"/>
</dbReference>
<dbReference type="GO" id="GO:0045493">
    <property type="term" value="P:xylan catabolic process"/>
    <property type="evidence" value="ECO:0007669"/>
    <property type="project" value="UniProtKB-KW"/>
</dbReference>
<dbReference type="InterPro" id="IPR029058">
    <property type="entry name" value="AB_hydrolase_fold"/>
</dbReference>
<dbReference type="InterPro" id="IPR011118">
    <property type="entry name" value="Tannase/feruloyl_esterase"/>
</dbReference>
<dbReference type="PANTHER" id="PTHR33938">
    <property type="entry name" value="FERULOYL ESTERASE B-RELATED"/>
    <property type="match status" value="1"/>
</dbReference>
<dbReference type="PANTHER" id="PTHR33938:SF15">
    <property type="entry name" value="FERULOYL ESTERASE B-RELATED"/>
    <property type="match status" value="1"/>
</dbReference>
<dbReference type="Pfam" id="PF07519">
    <property type="entry name" value="Tannase"/>
    <property type="match status" value="1"/>
</dbReference>
<dbReference type="SUPFAM" id="SSF53474">
    <property type="entry name" value="alpha/beta-Hydrolases"/>
    <property type="match status" value="1"/>
</dbReference>